<organism>
    <name type="scientific">Chlamydia muridarum (strain MoPn / Nigg)</name>
    <dbReference type="NCBI Taxonomy" id="243161"/>
    <lineage>
        <taxon>Bacteria</taxon>
        <taxon>Pseudomonadati</taxon>
        <taxon>Chlamydiota</taxon>
        <taxon>Chlamydiia</taxon>
        <taxon>Chlamydiales</taxon>
        <taxon>Chlamydiaceae</taxon>
        <taxon>Chlamydia/Chlamydophila group</taxon>
        <taxon>Chlamydia</taxon>
    </lineage>
</organism>
<feature type="chain" id="PRO_0000170379" description="Nucleoid-associated protein TC_0612">
    <location>
        <begin position="1"/>
        <end position="96"/>
    </location>
</feature>
<proteinExistence type="inferred from homology"/>
<reference key="1">
    <citation type="journal article" date="2000" name="Nucleic Acids Res.">
        <title>Genome sequences of Chlamydia trachomatis MoPn and Chlamydia pneumoniae AR39.</title>
        <authorList>
            <person name="Read T.D."/>
            <person name="Brunham R.C."/>
            <person name="Shen C."/>
            <person name="Gill S.R."/>
            <person name="Heidelberg J.F."/>
            <person name="White O."/>
            <person name="Hickey E.K."/>
            <person name="Peterson J.D."/>
            <person name="Utterback T.R."/>
            <person name="Berry K.J."/>
            <person name="Bass S."/>
            <person name="Linher K.D."/>
            <person name="Weidman J.F."/>
            <person name="Khouri H.M."/>
            <person name="Craven B."/>
            <person name="Bowman C."/>
            <person name="Dodson R.J."/>
            <person name="Gwinn M.L."/>
            <person name="Nelson W.C."/>
            <person name="DeBoy R.T."/>
            <person name="Kolonay J.F."/>
            <person name="McClarty G."/>
            <person name="Salzberg S.L."/>
            <person name="Eisen J.A."/>
            <person name="Fraser C.M."/>
        </authorList>
    </citation>
    <scope>NUCLEOTIDE SEQUENCE [LARGE SCALE GENOMIC DNA]</scope>
    <source>
        <strain>MoPn / Nigg</strain>
    </source>
</reference>
<evidence type="ECO:0000255" key="1">
    <source>
        <dbReference type="HAMAP-Rule" id="MF_00274"/>
    </source>
</evidence>
<name>Y612_CHLMU</name>
<dbReference type="EMBL" id="AE002160">
    <property type="protein sequence ID" value="AAF39443.1"/>
    <property type="molecule type" value="Genomic_DNA"/>
</dbReference>
<dbReference type="PIR" id="E81682">
    <property type="entry name" value="E81682"/>
</dbReference>
<dbReference type="RefSeq" id="WP_010230995.1">
    <property type="nucleotide sequence ID" value="NZ_CP063055.1"/>
</dbReference>
<dbReference type="SMR" id="Q9PK58"/>
<dbReference type="GeneID" id="1245974"/>
<dbReference type="KEGG" id="cmu:TC_0612"/>
<dbReference type="eggNOG" id="COG0718">
    <property type="taxonomic scope" value="Bacteria"/>
</dbReference>
<dbReference type="HOGENOM" id="CLU_140930_2_2_0"/>
<dbReference type="OrthoDB" id="19046at2"/>
<dbReference type="Proteomes" id="UP000000800">
    <property type="component" value="Chromosome"/>
</dbReference>
<dbReference type="GO" id="GO:0043590">
    <property type="term" value="C:bacterial nucleoid"/>
    <property type="evidence" value="ECO:0007669"/>
    <property type="project" value="UniProtKB-UniRule"/>
</dbReference>
<dbReference type="GO" id="GO:0005829">
    <property type="term" value="C:cytosol"/>
    <property type="evidence" value="ECO:0007669"/>
    <property type="project" value="TreeGrafter"/>
</dbReference>
<dbReference type="GO" id="GO:0003677">
    <property type="term" value="F:DNA binding"/>
    <property type="evidence" value="ECO:0007669"/>
    <property type="project" value="UniProtKB-UniRule"/>
</dbReference>
<dbReference type="FunFam" id="3.30.1310.10:FF:000009">
    <property type="entry name" value="Nucleoid-associated protein TC_0612"/>
    <property type="match status" value="1"/>
</dbReference>
<dbReference type="Gene3D" id="3.30.1310.10">
    <property type="entry name" value="Nucleoid-associated protein YbaB-like domain"/>
    <property type="match status" value="1"/>
</dbReference>
<dbReference type="HAMAP" id="MF_00274">
    <property type="entry name" value="DNA_YbaB_EbfC"/>
    <property type="match status" value="1"/>
</dbReference>
<dbReference type="InterPro" id="IPR036894">
    <property type="entry name" value="YbaB-like_sf"/>
</dbReference>
<dbReference type="InterPro" id="IPR004401">
    <property type="entry name" value="YbaB/EbfC"/>
</dbReference>
<dbReference type="NCBIfam" id="TIGR00103">
    <property type="entry name" value="DNA_YbaB_EbfC"/>
    <property type="match status" value="1"/>
</dbReference>
<dbReference type="PANTHER" id="PTHR33449">
    <property type="entry name" value="NUCLEOID-ASSOCIATED PROTEIN YBAB"/>
    <property type="match status" value="1"/>
</dbReference>
<dbReference type="PANTHER" id="PTHR33449:SF1">
    <property type="entry name" value="NUCLEOID-ASSOCIATED PROTEIN YBAB"/>
    <property type="match status" value="1"/>
</dbReference>
<dbReference type="Pfam" id="PF02575">
    <property type="entry name" value="YbaB_DNA_bd"/>
    <property type="match status" value="1"/>
</dbReference>
<dbReference type="PIRSF" id="PIRSF004555">
    <property type="entry name" value="UCP004555"/>
    <property type="match status" value="1"/>
</dbReference>
<dbReference type="SUPFAM" id="SSF82607">
    <property type="entry name" value="YbaB-like"/>
    <property type="match status" value="1"/>
</dbReference>
<protein>
    <recommendedName>
        <fullName evidence="1">Nucleoid-associated protein TC_0612</fullName>
    </recommendedName>
</protein>
<keyword id="KW-0963">Cytoplasm</keyword>
<keyword id="KW-0238">DNA-binding</keyword>
<comment type="function">
    <text evidence="1">Binds to DNA and alters its conformation. May be involved in regulation of gene expression, nucleoid organization and DNA protection.</text>
</comment>
<comment type="subunit">
    <text evidence="1">Homodimer.</text>
</comment>
<comment type="subcellular location">
    <subcellularLocation>
        <location evidence="1">Cytoplasm</location>
        <location evidence="1">Nucleoid</location>
    </subcellularLocation>
</comment>
<comment type="similarity">
    <text evidence="1">Belongs to the YbaB/EbfC family.</text>
</comment>
<sequence length="96" mass="10517">MGSGYAKKKKEAKLMERQFMEMEASLEQKRFSGEAGNGLVSVTINGKCNLVDVKIKPDCLDPEDPEVVADLFRAAFKAAKAALDSEMSAMHMGMPF</sequence>
<gene>
    <name type="ordered locus">TC_0612</name>
</gene>
<accession>Q9PK58</accession>